<proteinExistence type="inferred from homology"/>
<sequence length="190" mass="21398">MKGKLKKFYNLVEALETLPSIGKKSAGRLAFHMVLHSPMDALKLAHAIEDAVSSIHRCTQCGGLSEDELCYICSDELRDRSSLCLVESARDIYVIEESGEYHGLYFVFESLNERILANLKEMIKNNGVQEIIFAFTPSMQSDATMLYIEDQLQEFHLHFTKIAQGVPTGVHLENVDMLSLSKAISERVKI</sequence>
<protein>
    <recommendedName>
        <fullName evidence="1">Recombination protein RecR</fullName>
    </recommendedName>
</protein>
<organism>
    <name type="scientific">Nitratiruptor sp. (strain SB155-2)</name>
    <dbReference type="NCBI Taxonomy" id="387092"/>
    <lineage>
        <taxon>Bacteria</taxon>
        <taxon>Pseudomonadati</taxon>
        <taxon>Campylobacterota</taxon>
        <taxon>Epsilonproteobacteria</taxon>
        <taxon>Nautiliales</taxon>
        <taxon>Nitratiruptoraceae</taxon>
        <taxon>Nitratiruptor</taxon>
    </lineage>
</organism>
<accession>A6Q485</accession>
<reference key="1">
    <citation type="journal article" date="2007" name="Proc. Natl. Acad. Sci. U.S.A.">
        <title>Deep-sea vent epsilon-proteobacterial genomes provide insights into emergence of pathogens.</title>
        <authorList>
            <person name="Nakagawa S."/>
            <person name="Takaki Y."/>
            <person name="Shimamura S."/>
            <person name="Reysenbach A.-L."/>
            <person name="Takai K."/>
            <person name="Horikoshi K."/>
        </authorList>
    </citation>
    <scope>NUCLEOTIDE SEQUENCE [LARGE SCALE GENOMIC DNA]</scope>
    <source>
        <strain>SB155-2</strain>
    </source>
</reference>
<feature type="chain" id="PRO_0000322921" description="Recombination protein RecR">
    <location>
        <begin position="1"/>
        <end position="190"/>
    </location>
</feature>
<feature type="domain" description="Toprim" evidence="1">
    <location>
        <begin position="81"/>
        <end position="167"/>
    </location>
</feature>
<feature type="zinc finger region" description="C4-type" evidence="1">
    <location>
        <begin position="58"/>
        <end position="73"/>
    </location>
</feature>
<evidence type="ECO:0000255" key="1">
    <source>
        <dbReference type="HAMAP-Rule" id="MF_00017"/>
    </source>
</evidence>
<dbReference type="EMBL" id="AP009178">
    <property type="protein sequence ID" value="BAF70294.1"/>
    <property type="molecule type" value="Genomic_DNA"/>
</dbReference>
<dbReference type="RefSeq" id="WP_012082557.1">
    <property type="nucleotide sequence ID" value="NC_009662.1"/>
</dbReference>
<dbReference type="SMR" id="A6Q485"/>
<dbReference type="FunCoup" id="A6Q485">
    <property type="interactions" value="200"/>
</dbReference>
<dbReference type="STRING" id="387092.NIS_1185"/>
<dbReference type="KEGG" id="nis:NIS_1185"/>
<dbReference type="eggNOG" id="COG0353">
    <property type="taxonomic scope" value="Bacteria"/>
</dbReference>
<dbReference type="HOGENOM" id="CLU_060739_1_1_7"/>
<dbReference type="InParanoid" id="A6Q485"/>
<dbReference type="OrthoDB" id="9802672at2"/>
<dbReference type="Proteomes" id="UP000001118">
    <property type="component" value="Chromosome"/>
</dbReference>
<dbReference type="GO" id="GO:0003677">
    <property type="term" value="F:DNA binding"/>
    <property type="evidence" value="ECO:0007669"/>
    <property type="project" value="UniProtKB-UniRule"/>
</dbReference>
<dbReference type="GO" id="GO:0008270">
    <property type="term" value="F:zinc ion binding"/>
    <property type="evidence" value="ECO:0007669"/>
    <property type="project" value="UniProtKB-KW"/>
</dbReference>
<dbReference type="GO" id="GO:0006310">
    <property type="term" value="P:DNA recombination"/>
    <property type="evidence" value="ECO:0007669"/>
    <property type="project" value="UniProtKB-UniRule"/>
</dbReference>
<dbReference type="GO" id="GO:0006281">
    <property type="term" value="P:DNA repair"/>
    <property type="evidence" value="ECO:0007669"/>
    <property type="project" value="UniProtKB-UniRule"/>
</dbReference>
<dbReference type="CDD" id="cd01025">
    <property type="entry name" value="TOPRIM_recR"/>
    <property type="match status" value="1"/>
</dbReference>
<dbReference type="Gene3D" id="3.40.1360.10">
    <property type="match status" value="1"/>
</dbReference>
<dbReference type="Gene3D" id="1.10.8.420">
    <property type="entry name" value="RecR Domain 1"/>
    <property type="match status" value="1"/>
</dbReference>
<dbReference type="HAMAP" id="MF_00017">
    <property type="entry name" value="RecR"/>
    <property type="match status" value="1"/>
</dbReference>
<dbReference type="InterPro" id="IPR000093">
    <property type="entry name" value="DNA_Rcmb_RecR"/>
</dbReference>
<dbReference type="InterPro" id="IPR023627">
    <property type="entry name" value="Rcmb_RecR"/>
</dbReference>
<dbReference type="InterPro" id="IPR015967">
    <property type="entry name" value="Rcmb_RecR_Znf"/>
</dbReference>
<dbReference type="InterPro" id="IPR006171">
    <property type="entry name" value="TOPRIM_dom"/>
</dbReference>
<dbReference type="InterPro" id="IPR034137">
    <property type="entry name" value="TOPRIM_RecR"/>
</dbReference>
<dbReference type="NCBIfam" id="TIGR00615">
    <property type="entry name" value="recR"/>
    <property type="match status" value="1"/>
</dbReference>
<dbReference type="PANTHER" id="PTHR30446">
    <property type="entry name" value="RECOMBINATION PROTEIN RECR"/>
    <property type="match status" value="1"/>
</dbReference>
<dbReference type="PANTHER" id="PTHR30446:SF0">
    <property type="entry name" value="RECOMBINATION PROTEIN RECR"/>
    <property type="match status" value="1"/>
</dbReference>
<dbReference type="Pfam" id="PF21176">
    <property type="entry name" value="RecR_HhH"/>
    <property type="match status" value="1"/>
</dbReference>
<dbReference type="Pfam" id="PF02132">
    <property type="entry name" value="RecR_ZnF"/>
    <property type="match status" value="1"/>
</dbReference>
<dbReference type="Pfam" id="PF13662">
    <property type="entry name" value="Toprim_4"/>
    <property type="match status" value="1"/>
</dbReference>
<dbReference type="SUPFAM" id="SSF111304">
    <property type="entry name" value="Recombination protein RecR"/>
    <property type="match status" value="1"/>
</dbReference>
<dbReference type="PROSITE" id="PS01300">
    <property type="entry name" value="RECR"/>
    <property type="match status" value="1"/>
</dbReference>
<dbReference type="PROSITE" id="PS50880">
    <property type="entry name" value="TOPRIM"/>
    <property type="match status" value="1"/>
</dbReference>
<gene>
    <name evidence="1" type="primary">recR</name>
    <name type="ordered locus">NIS_1185</name>
</gene>
<comment type="function">
    <text evidence="1">May play a role in DNA repair. It seems to be involved in an RecBC-independent recombinational process of DNA repair. It may act with RecF and RecO.</text>
</comment>
<comment type="similarity">
    <text evidence="1">Belongs to the RecR family.</text>
</comment>
<keyword id="KW-0227">DNA damage</keyword>
<keyword id="KW-0233">DNA recombination</keyword>
<keyword id="KW-0234">DNA repair</keyword>
<keyword id="KW-0479">Metal-binding</keyword>
<keyword id="KW-1185">Reference proteome</keyword>
<keyword id="KW-0862">Zinc</keyword>
<keyword id="KW-0863">Zinc-finger</keyword>
<name>RECR_NITSB</name>